<protein>
    <recommendedName>
        <fullName evidence="1">Flap endonuclease Xni</fullName>
        <shortName evidence="1">FEN</shortName>
        <ecNumber evidence="1">3.1.-.-</ecNumber>
    </recommendedName>
</protein>
<gene>
    <name evidence="1" type="primary">xni</name>
    <name evidence="1" type="synonym">ygdG</name>
    <name type="ordered locus">SPAB_03696</name>
</gene>
<sequence>MAAHLLIVDALNLIRRIHAVQGSPCVETCQHALDQLIIHSQPTHAVAVFDDDARSSGWRHQRLPDYKAGRPPMPDDLHNEMPALRAAFEQRGVRCWASDGNEADDLAATLALKVTEAGHQATIVSTDKGYCQLLSPGLRIRDYFQKRWLDAPFIEKEFGVLPRQLPDYWGLAGISSSKVPGVAGIGPKSATQLLIQFQNLEGIYAHLDEVPEKWRKKLETHKEMAFLCRDIARLQTDLHIDGNLQQLRLAR</sequence>
<name>XNI_SALPB</name>
<comment type="function">
    <text evidence="1">Has flap endonuclease activity. During DNA replication, flap endonucleases cleave the 5'-overhanging flap structure that is generated by displacement synthesis when DNA polymerase encounters the 5'-end of a downstream Okazaki fragment.</text>
</comment>
<comment type="cofactor">
    <cofactor evidence="1">
        <name>Mg(2+)</name>
        <dbReference type="ChEBI" id="CHEBI:18420"/>
    </cofactor>
    <text evidence="1">Binds 2 Mg(2+) per subunit. Only one magnesium ion has a direct interaction with the protein, the other interactions are indirect.</text>
</comment>
<comment type="cofactor">
    <cofactor evidence="1">
        <name>K(+)</name>
        <dbReference type="ChEBI" id="CHEBI:29103"/>
    </cofactor>
    <text evidence="1">Binds 1 K(+) per subunit. The potassium ion strongly increases the affinity for DNA.</text>
</comment>
<comment type="similarity">
    <text evidence="1">Belongs to the Xni family.</text>
</comment>
<proteinExistence type="inferred from homology"/>
<reference key="1">
    <citation type="submission" date="2007-11" db="EMBL/GenBank/DDBJ databases">
        <authorList>
            <consortium name="The Salmonella enterica serovar Paratyphi B Genome Sequencing Project"/>
            <person name="McClelland M."/>
            <person name="Sanderson E.K."/>
            <person name="Porwollik S."/>
            <person name="Spieth J."/>
            <person name="Clifton W.S."/>
            <person name="Fulton R."/>
            <person name="Cordes M."/>
            <person name="Wollam A."/>
            <person name="Shah N."/>
            <person name="Pepin K."/>
            <person name="Bhonagiri V."/>
            <person name="Nash W."/>
            <person name="Johnson M."/>
            <person name="Thiruvilangam P."/>
            <person name="Wilson R."/>
        </authorList>
    </citation>
    <scope>NUCLEOTIDE SEQUENCE [LARGE SCALE GENOMIC DNA]</scope>
    <source>
        <strain>ATCC BAA-1250 / SPB7</strain>
    </source>
</reference>
<evidence type="ECO:0000255" key="1">
    <source>
        <dbReference type="HAMAP-Rule" id="MF_01192"/>
    </source>
</evidence>
<organism>
    <name type="scientific">Salmonella paratyphi B (strain ATCC BAA-1250 / SPB7)</name>
    <dbReference type="NCBI Taxonomy" id="1016998"/>
    <lineage>
        <taxon>Bacteria</taxon>
        <taxon>Pseudomonadati</taxon>
        <taxon>Pseudomonadota</taxon>
        <taxon>Gammaproteobacteria</taxon>
        <taxon>Enterobacterales</taxon>
        <taxon>Enterobacteriaceae</taxon>
        <taxon>Salmonella</taxon>
    </lineage>
</organism>
<dbReference type="EC" id="3.1.-.-" evidence="1"/>
<dbReference type="EMBL" id="CP000886">
    <property type="protein sequence ID" value="ABX69034.1"/>
    <property type="molecule type" value="Genomic_DNA"/>
</dbReference>
<dbReference type="RefSeq" id="WP_001519360.1">
    <property type="nucleotide sequence ID" value="NC_010102.1"/>
</dbReference>
<dbReference type="SMR" id="A9N2I4"/>
<dbReference type="KEGG" id="spq:SPAB_03696"/>
<dbReference type="PATRIC" id="fig|1016998.12.peg.3482"/>
<dbReference type="HOGENOM" id="CLU_004675_1_2_6"/>
<dbReference type="Proteomes" id="UP000008556">
    <property type="component" value="Chromosome"/>
</dbReference>
<dbReference type="GO" id="GO:0008409">
    <property type="term" value="F:5'-3' exonuclease activity"/>
    <property type="evidence" value="ECO:0007669"/>
    <property type="project" value="InterPro"/>
</dbReference>
<dbReference type="GO" id="GO:0017108">
    <property type="term" value="F:5'-flap endonuclease activity"/>
    <property type="evidence" value="ECO:0007669"/>
    <property type="project" value="UniProtKB-UniRule"/>
</dbReference>
<dbReference type="GO" id="GO:0003677">
    <property type="term" value="F:DNA binding"/>
    <property type="evidence" value="ECO:0007669"/>
    <property type="project" value="UniProtKB-UniRule"/>
</dbReference>
<dbReference type="GO" id="GO:0000287">
    <property type="term" value="F:magnesium ion binding"/>
    <property type="evidence" value="ECO:0007669"/>
    <property type="project" value="UniProtKB-UniRule"/>
</dbReference>
<dbReference type="GO" id="GO:0030955">
    <property type="term" value="F:potassium ion binding"/>
    <property type="evidence" value="ECO:0007669"/>
    <property type="project" value="UniProtKB-UniRule"/>
</dbReference>
<dbReference type="GO" id="GO:0033567">
    <property type="term" value="P:DNA replication, Okazaki fragment processing"/>
    <property type="evidence" value="ECO:0007669"/>
    <property type="project" value="UniProtKB-UniRule"/>
</dbReference>
<dbReference type="CDD" id="cd09898">
    <property type="entry name" value="H3TH_53EXO"/>
    <property type="match status" value="1"/>
</dbReference>
<dbReference type="CDD" id="cd09859">
    <property type="entry name" value="PIN_53EXO"/>
    <property type="match status" value="1"/>
</dbReference>
<dbReference type="FunFam" id="1.10.150.20:FF:000003">
    <property type="entry name" value="DNA polymerase I"/>
    <property type="match status" value="1"/>
</dbReference>
<dbReference type="FunFam" id="3.40.50.1010:FF:000011">
    <property type="entry name" value="Flap endonuclease Xni"/>
    <property type="match status" value="1"/>
</dbReference>
<dbReference type="Gene3D" id="1.10.150.20">
    <property type="entry name" value="5' to 3' exonuclease, C-terminal subdomain"/>
    <property type="match status" value="1"/>
</dbReference>
<dbReference type="Gene3D" id="3.40.50.1010">
    <property type="entry name" value="5'-nuclease"/>
    <property type="match status" value="1"/>
</dbReference>
<dbReference type="HAMAP" id="MF_01192">
    <property type="entry name" value="Xni"/>
    <property type="match status" value="1"/>
</dbReference>
<dbReference type="InterPro" id="IPR020046">
    <property type="entry name" value="5-3_exonucl_a-hlix_arch_N"/>
</dbReference>
<dbReference type="InterPro" id="IPR002421">
    <property type="entry name" value="5-3_exonuclease"/>
</dbReference>
<dbReference type="InterPro" id="IPR036279">
    <property type="entry name" value="5-3_exonuclease_C_sf"/>
</dbReference>
<dbReference type="InterPro" id="IPR020045">
    <property type="entry name" value="DNA_polI_H3TH"/>
</dbReference>
<dbReference type="InterPro" id="IPR038969">
    <property type="entry name" value="FEN"/>
</dbReference>
<dbReference type="InterPro" id="IPR008918">
    <property type="entry name" value="HhH2"/>
</dbReference>
<dbReference type="InterPro" id="IPR029060">
    <property type="entry name" value="PIN-like_dom_sf"/>
</dbReference>
<dbReference type="InterPro" id="IPR022895">
    <property type="entry name" value="Xni"/>
</dbReference>
<dbReference type="NCBIfam" id="NF007017">
    <property type="entry name" value="PRK09482.1"/>
    <property type="match status" value="1"/>
</dbReference>
<dbReference type="PANTHER" id="PTHR42646:SF2">
    <property type="entry name" value="5'-3' EXONUCLEASE FAMILY PROTEIN"/>
    <property type="match status" value="1"/>
</dbReference>
<dbReference type="PANTHER" id="PTHR42646">
    <property type="entry name" value="FLAP ENDONUCLEASE XNI"/>
    <property type="match status" value="1"/>
</dbReference>
<dbReference type="Pfam" id="PF01367">
    <property type="entry name" value="5_3_exonuc"/>
    <property type="match status" value="1"/>
</dbReference>
<dbReference type="Pfam" id="PF02739">
    <property type="entry name" value="5_3_exonuc_N"/>
    <property type="match status" value="1"/>
</dbReference>
<dbReference type="SMART" id="SM00475">
    <property type="entry name" value="53EXOc"/>
    <property type="match status" value="1"/>
</dbReference>
<dbReference type="SMART" id="SM00279">
    <property type="entry name" value="HhH2"/>
    <property type="match status" value="1"/>
</dbReference>
<dbReference type="SUPFAM" id="SSF47807">
    <property type="entry name" value="5' to 3' exonuclease, C-terminal subdomain"/>
    <property type="match status" value="1"/>
</dbReference>
<dbReference type="SUPFAM" id="SSF88723">
    <property type="entry name" value="PIN domain-like"/>
    <property type="match status" value="1"/>
</dbReference>
<keyword id="KW-0238">DNA-binding</keyword>
<keyword id="KW-0255">Endonuclease</keyword>
<keyword id="KW-0378">Hydrolase</keyword>
<keyword id="KW-0460">Magnesium</keyword>
<keyword id="KW-0479">Metal-binding</keyword>
<keyword id="KW-0540">Nuclease</keyword>
<keyword id="KW-0630">Potassium</keyword>
<accession>A9N2I4</accession>
<feature type="chain" id="PRO_1000085475" description="Flap endonuclease Xni">
    <location>
        <begin position="1"/>
        <end position="251"/>
    </location>
</feature>
<feature type="domain" description="5'-3' exonuclease" evidence="1">
    <location>
        <begin position="160"/>
        <end position="249"/>
    </location>
</feature>
<feature type="region of interest" description="Interaction with DNA" evidence="1">
    <location>
        <begin position="184"/>
        <end position="189"/>
    </location>
</feature>
<feature type="binding site" evidence="1">
    <location>
        <position position="104"/>
    </location>
    <ligand>
        <name>Mg(2+)</name>
        <dbReference type="ChEBI" id="CHEBI:18420"/>
    </ligand>
</feature>
<feature type="binding site" evidence="1">
    <location>
        <position position="171"/>
    </location>
    <ligand>
        <name>K(+)</name>
        <dbReference type="ChEBI" id="CHEBI:29103"/>
    </ligand>
</feature>
<feature type="binding site" evidence="1">
    <location>
        <position position="172"/>
    </location>
    <ligand>
        <name>K(+)</name>
        <dbReference type="ChEBI" id="CHEBI:29103"/>
    </ligand>
</feature>
<feature type="binding site" evidence="1">
    <location>
        <position position="180"/>
    </location>
    <ligand>
        <name>K(+)</name>
        <dbReference type="ChEBI" id="CHEBI:29103"/>
    </ligand>
</feature>
<feature type="binding site" evidence="1">
    <location>
        <position position="182"/>
    </location>
    <ligand>
        <name>K(+)</name>
        <dbReference type="ChEBI" id="CHEBI:29103"/>
    </ligand>
</feature>
<feature type="binding site" evidence="1">
    <location>
        <position position="185"/>
    </location>
    <ligand>
        <name>K(+)</name>
        <dbReference type="ChEBI" id="CHEBI:29103"/>
    </ligand>
</feature>